<organism>
    <name type="scientific">Homo sapiens</name>
    <name type="common">Human</name>
    <dbReference type="NCBI Taxonomy" id="9606"/>
    <lineage>
        <taxon>Eukaryota</taxon>
        <taxon>Metazoa</taxon>
        <taxon>Chordata</taxon>
        <taxon>Craniata</taxon>
        <taxon>Vertebrata</taxon>
        <taxon>Euteleostomi</taxon>
        <taxon>Mammalia</taxon>
        <taxon>Eutheria</taxon>
        <taxon>Euarchontoglires</taxon>
        <taxon>Primates</taxon>
        <taxon>Haplorrhini</taxon>
        <taxon>Catarrhini</taxon>
        <taxon>Hominidae</taxon>
        <taxon>Homo</taxon>
    </lineage>
</organism>
<comment type="subcellular location">
    <subcellularLocation>
        <location evidence="8">Nucleus</location>
    </subcellularLocation>
</comment>
<comment type="subcellular location">
    <molecule>Isoform 3</molecule>
    <subcellularLocation>
        <location evidence="14">Membrane</location>
        <topology evidence="14">Lipid-anchor</topology>
    </subcellularLocation>
</comment>
<comment type="subcellular location">
    <molecule>Isoform 4</molecule>
    <subcellularLocation>
        <location evidence="14">Membrane</location>
        <topology evidence="14">Lipid-anchor</topology>
    </subcellularLocation>
</comment>
<comment type="subcellular location">
    <molecule>Isoform 5</molecule>
    <subcellularLocation>
        <location evidence="14">Membrane</location>
        <topology evidence="14">Lipid-anchor</topology>
    </subcellularLocation>
</comment>
<comment type="alternative products">
    <event type="alternative splicing"/>
    <isoform>
        <id>Q5M775-1</id>
        <name>1</name>
        <name>NSP5beta3beta</name>
        <sequence type="displayed"/>
    </isoform>
    <isoform>
        <id>Q5M775-2</id>
        <name>2</name>
        <name>NSP5beta3alpha</name>
        <sequence type="described" ref="VSP_021164 VSP_021165"/>
    </isoform>
    <isoform>
        <id>Q5M775-3</id>
        <name>3</name>
        <name>NSP5alpha3alpha</name>
        <sequence type="described" ref="VSP_021162 VSP_021164 VSP_021165"/>
    </isoform>
    <isoform>
        <id>Q5M775-4</id>
        <name>4</name>
        <name>NSP5alpha3beta</name>
        <sequence type="described" ref="VSP_021162"/>
    </isoform>
    <isoform>
        <id>Q5M775-5</id>
        <name>5</name>
        <sequence type="described" ref="VSP_021162 VSP_021163"/>
    </isoform>
</comment>
<comment type="tissue specificity">
    <text evidence="8">Highly expressed in testis. Barely detectable in other tissues. Also highly expressed in some cancer cell lines.</text>
</comment>
<comment type="disease">
    <text evidence="6">A chromosomal aberration involving CYTSB may be a cause of juvenile myelomonocytic leukemia. Translocation t(5;17)(q33;p11.2) with PDGFRB.</text>
</comment>
<comment type="similarity">
    <text evidence="14">Belongs to the cytospin-A family.</text>
</comment>
<comment type="sequence caution" evidence="14">
    <conflict type="erroneous initiation">
        <sequence resource="EMBL-CDS" id="AAH33618"/>
    </conflict>
    <text>Extended N-terminus.</text>
</comment>
<comment type="sequence caution" evidence="14">
    <conflict type="frameshift">
        <sequence resource="EMBL-CDS" id="BAB16440"/>
    </conflict>
</comment>
<comment type="online information" name="Atlas of Genetics and Cytogenetics in Oncology and Haematology">
    <link uri="https://atlasgeneticsoncology.org/gene/174/HCMOGT1"/>
</comment>
<name>CYTSB_HUMAN</name>
<dbReference type="EMBL" id="AB041533">
    <property type="protein sequence ID" value="BAB16440.1"/>
    <property type="status" value="ALT_FRAME"/>
    <property type="molecule type" value="mRNA"/>
</dbReference>
<dbReference type="EMBL" id="AY816326">
    <property type="protein sequence ID" value="AAW29999.1"/>
    <property type="molecule type" value="mRNA"/>
</dbReference>
<dbReference type="EMBL" id="AY816327">
    <property type="protein sequence ID" value="AAW30000.1"/>
    <property type="molecule type" value="mRNA"/>
</dbReference>
<dbReference type="EMBL" id="AY816328">
    <property type="protein sequence ID" value="AAW30001.1"/>
    <property type="molecule type" value="mRNA"/>
</dbReference>
<dbReference type="EMBL" id="AY816329">
    <property type="protein sequence ID" value="AAW30002.1"/>
    <property type="molecule type" value="mRNA"/>
</dbReference>
<dbReference type="EMBL" id="BK005598">
    <property type="protein sequence ID" value="DAA05629.1"/>
    <property type="molecule type" value="Genomic_DNA"/>
</dbReference>
<dbReference type="EMBL" id="BK005598">
    <property type="protein sequence ID" value="DAA05630.1"/>
    <property type="molecule type" value="Genomic_DNA"/>
</dbReference>
<dbReference type="EMBL" id="BK005598">
    <property type="protein sequence ID" value="DAA05631.1"/>
    <property type="molecule type" value="Genomic_DNA"/>
</dbReference>
<dbReference type="EMBL" id="BK005598">
    <property type="protein sequence ID" value="DAA05632.1"/>
    <property type="molecule type" value="Genomic_DNA"/>
</dbReference>
<dbReference type="EMBL" id="AK295093">
    <property type="protein sequence ID" value="BAG58132.1"/>
    <property type="molecule type" value="mRNA"/>
</dbReference>
<dbReference type="EMBL" id="AC005730">
    <property type="status" value="NOT_ANNOTATED_CDS"/>
    <property type="molecule type" value="Genomic_DNA"/>
</dbReference>
<dbReference type="EMBL" id="BC021123">
    <property type="protein sequence ID" value="AAH21123.2"/>
    <property type="molecule type" value="mRNA"/>
</dbReference>
<dbReference type="EMBL" id="BC033618">
    <property type="protein sequence ID" value="AAH33618.1"/>
    <property type="status" value="ALT_INIT"/>
    <property type="molecule type" value="mRNA"/>
</dbReference>
<dbReference type="EMBL" id="BC050058">
    <property type="protein sequence ID" value="AAH50058.1"/>
    <property type="molecule type" value="mRNA"/>
</dbReference>
<dbReference type="CCDS" id="CCDS32590.1">
    <molecule id="Q5M775-1"/>
</dbReference>
<dbReference type="CCDS" id="CCDS42280.1">
    <molecule id="Q5M775-2"/>
</dbReference>
<dbReference type="CCDS" id="CCDS42281.1">
    <molecule id="Q5M775-4"/>
</dbReference>
<dbReference type="CCDS" id="CCDS45628.1">
    <molecule id="Q5M775-3"/>
</dbReference>
<dbReference type="CCDS" id="CCDS58531.1">
    <molecule id="Q5M775-5"/>
</dbReference>
<dbReference type="RefSeq" id="NP_001028725.1">
    <molecule id="Q5M775-1"/>
    <property type="nucleotide sequence ID" value="NM_001033553.3"/>
</dbReference>
<dbReference type="RefSeq" id="NP_001028726.1">
    <molecule id="Q5M775-3"/>
    <property type="nucleotide sequence ID" value="NM_001033554.3"/>
</dbReference>
<dbReference type="RefSeq" id="NP_001028727.1">
    <molecule id="Q5M775-4"/>
    <property type="nucleotide sequence ID" value="NM_001033555.3"/>
</dbReference>
<dbReference type="RefSeq" id="NP_001230367.1">
    <molecule id="Q5M775-5"/>
    <property type="nucleotide sequence ID" value="NM_001243438.2"/>
</dbReference>
<dbReference type="RefSeq" id="NP_001230368.1">
    <molecule id="Q5M775-1"/>
    <property type="nucleotide sequence ID" value="NM_001243439.2"/>
</dbReference>
<dbReference type="RefSeq" id="NP_001373012.2">
    <molecule id="Q5M775-1"/>
    <property type="nucleotide sequence ID" value="NM_001386083.2"/>
</dbReference>
<dbReference type="RefSeq" id="NP_690868.3">
    <molecule id="Q5M775-2"/>
    <property type="nucleotide sequence ID" value="NM_152904.4"/>
</dbReference>
<dbReference type="RefSeq" id="XP_016880814.1">
    <molecule id="Q5M775-2"/>
    <property type="nucleotide sequence ID" value="XM_017025325.2"/>
</dbReference>
<dbReference type="RefSeq" id="XP_047293025.1">
    <molecule id="Q5M775-1"/>
    <property type="nucleotide sequence ID" value="XM_047437069.1"/>
</dbReference>
<dbReference type="RefSeq" id="XP_047293027.1">
    <molecule id="Q5M775-1"/>
    <property type="nucleotide sequence ID" value="XM_047437071.1"/>
</dbReference>
<dbReference type="RefSeq" id="XP_054173767.1">
    <molecule id="Q5M775-1"/>
    <property type="nucleotide sequence ID" value="XM_054317792.1"/>
</dbReference>
<dbReference type="RefSeq" id="XP_054173770.1">
    <molecule id="Q5M775-1"/>
    <property type="nucleotide sequence ID" value="XM_054317795.1"/>
</dbReference>
<dbReference type="RefSeq" id="XP_054173773.1">
    <molecule id="Q5M775-2"/>
    <property type="nucleotide sequence ID" value="XM_054317798.1"/>
</dbReference>
<dbReference type="SMR" id="Q5M775"/>
<dbReference type="BioGRID" id="124953">
    <property type="interactions" value="163"/>
</dbReference>
<dbReference type="FunCoup" id="Q5M775">
    <property type="interactions" value="2090"/>
</dbReference>
<dbReference type="IntAct" id="Q5M775">
    <property type="interactions" value="92"/>
</dbReference>
<dbReference type="MINT" id="Q5M775"/>
<dbReference type="STRING" id="9606.ENSP00000261503"/>
<dbReference type="GlyGen" id="Q5M775">
    <property type="glycosylation" value="3 sites, 1 N-linked glycan (1 site), 1 O-linked glycan (1 site)"/>
</dbReference>
<dbReference type="iPTMnet" id="Q5M775"/>
<dbReference type="PhosphoSitePlus" id="Q5M775"/>
<dbReference type="BioMuta" id="SPECC1"/>
<dbReference type="DMDM" id="74722683"/>
<dbReference type="jPOST" id="Q5M775"/>
<dbReference type="MassIVE" id="Q5M775"/>
<dbReference type="PaxDb" id="9606-ENSP00000261503"/>
<dbReference type="PeptideAtlas" id="Q5M775"/>
<dbReference type="ProteomicsDB" id="63559">
    <molecule id="Q5M775-1"/>
</dbReference>
<dbReference type="ProteomicsDB" id="63560">
    <molecule id="Q5M775-2"/>
</dbReference>
<dbReference type="ProteomicsDB" id="63561">
    <molecule id="Q5M775-3"/>
</dbReference>
<dbReference type="ProteomicsDB" id="63562">
    <molecule id="Q5M775-4"/>
</dbReference>
<dbReference type="ProteomicsDB" id="63563">
    <molecule id="Q5M775-5"/>
</dbReference>
<dbReference type="Pumba" id="Q5M775"/>
<dbReference type="Antibodypedia" id="13788">
    <property type="antibodies" value="229 antibodies from 18 providers"/>
</dbReference>
<dbReference type="DNASU" id="92521"/>
<dbReference type="Ensembl" id="ENST00000261503.9">
    <molecule id="Q5M775-1"/>
    <property type="protein sequence ID" value="ENSP00000261503.5"/>
    <property type="gene ID" value="ENSG00000128487.19"/>
</dbReference>
<dbReference type="Ensembl" id="ENST00000395522.6">
    <molecule id="Q5M775-5"/>
    <property type="protein sequence ID" value="ENSP00000378893.2"/>
    <property type="gene ID" value="ENSG00000128487.19"/>
</dbReference>
<dbReference type="Ensembl" id="ENST00000395525.7">
    <molecule id="Q5M775-3"/>
    <property type="protein sequence ID" value="ENSP00000378896.3"/>
    <property type="gene ID" value="ENSG00000128487.19"/>
</dbReference>
<dbReference type="Ensembl" id="ENST00000395527.9">
    <molecule id="Q5M775-1"/>
    <property type="protein sequence ID" value="ENSP00000378898.4"/>
    <property type="gene ID" value="ENSG00000128487.19"/>
</dbReference>
<dbReference type="Ensembl" id="ENST00000395529.7">
    <molecule id="Q5M775-2"/>
    <property type="protein sequence ID" value="ENSP00000378900.3"/>
    <property type="gene ID" value="ENSG00000128487.19"/>
</dbReference>
<dbReference type="Ensembl" id="ENST00000395530.6">
    <molecule id="Q5M775-4"/>
    <property type="protein sequence ID" value="ENSP00000378901.2"/>
    <property type="gene ID" value="ENSG00000128487.19"/>
</dbReference>
<dbReference type="Ensembl" id="ENST00000676570.1">
    <molecule id="Q5M775-2"/>
    <property type="protein sequence ID" value="ENSP00000503507.1"/>
    <property type="gene ID" value="ENSG00000128487.19"/>
</dbReference>
<dbReference type="Ensembl" id="ENST00000677914.1">
    <molecule id="Q5M775-1"/>
    <property type="protein sequence ID" value="ENSP00000503971.1"/>
    <property type="gene ID" value="ENSG00000128487.19"/>
</dbReference>
<dbReference type="Ensembl" id="ENST00000679049.1">
    <molecule id="Q5M775-2"/>
    <property type="protein sequence ID" value="ENSP00000503499.1"/>
    <property type="gene ID" value="ENSG00000128487.19"/>
</dbReference>
<dbReference type="Ensembl" id="ENST00000679058.1">
    <molecule id="Q5M775-1"/>
    <property type="protein sequence ID" value="ENSP00000502924.1"/>
    <property type="gene ID" value="ENSG00000128487.19"/>
</dbReference>
<dbReference type="Ensembl" id="ENST00000679255.1">
    <molecule id="Q5M775-1"/>
    <property type="protein sequence ID" value="ENSP00000504211.1"/>
    <property type="gene ID" value="ENSG00000128487.19"/>
</dbReference>
<dbReference type="Ensembl" id="ENST00000680373.1">
    <molecule id="Q5M775-5"/>
    <property type="protein sequence ID" value="ENSP00000506254.1"/>
    <property type="gene ID" value="ENSG00000128487.19"/>
</dbReference>
<dbReference type="Ensembl" id="ENST00000680374.1">
    <molecule id="Q5M775-2"/>
    <property type="protein sequence ID" value="ENSP00000505715.1"/>
    <property type="gene ID" value="ENSG00000128487.19"/>
</dbReference>
<dbReference type="Ensembl" id="ENST00000680572.1">
    <molecule id="Q5M775-2"/>
    <property type="protein sequence ID" value="ENSP00000505383.1"/>
    <property type="gene ID" value="ENSG00000128487.19"/>
</dbReference>
<dbReference type="Ensembl" id="ENST00000681593.1">
    <molecule id="Q5M775-2"/>
    <property type="protein sequence ID" value="ENSP00000504996.1"/>
    <property type="gene ID" value="ENSG00000128487.19"/>
</dbReference>
<dbReference type="GeneID" id="92521"/>
<dbReference type="KEGG" id="hsa:92521"/>
<dbReference type="MANE-Select" id="ENST00000395527.9">
    <property type="protein sequence ID" value="ENSP00000378898.4"/>
    <property type="RefSeq nucleotide sequence ID" value="NM_001243439.2"/>
    <property type="RefSeq protein sequence ID" value="NP_001230368.1"/>
</dbReference>
<dbReference type="UCSC" id="uc002gwq.4">
    <molecule id="Q5M775-1"/>
    <property type="organism name" value="human"/>
</dbReference>
<dbReference type="AGR" id="HGNC:30615"/>
<dbReference type="CTD" id="92521"/>
<dbReference type="DisGeNET" id="92521"/>
<dbReference type="GeneCards" id="SPECC1"/>
<dbReference type="HGNC" id="HGNC:30615">
    <property type="gene designation" value="SPECC1"/>
</dbReference>
<dbReference type="HPA" id="ENSG00000128487">
    <property type="expression patterns" value="Low tissue specificity"/>
</dbReference>
<dbReference type="MIM" id="608793">
    <property type="type" value="gene"/>
</dbReference>
<dbReference type="neXtProt" id="NX_Q5M775"/>
<dbReference type="OpenTargets" id="ENSG00000128487"/>
<dbReference type="PharmGKB" id="PA164718712"/>
<dbReference type="VEuPathDB" id="HostDB:ENSG00000128487"/>
<dbReference type="eggNOG" id="KOG4678">
    <property type="taxonomic scope" value="Eukaryota"/>
</dbReference>
<dbReference type="GeneTree" id="ENSGT00940000153592"/>
<dbReference type="HOGENOM" id="CLU_009328_2_0_1"/>
<dbReference type="InParanoid" id="Q5M775"/>
<dbReference type="OMA" id="LISELEX"/>
<dbReference type="OrthoDB" id="21607at2759"/>
<dbReference type="PAN-GO" id="Q5M775">
    <property type="GO annotations" value="3 GO annotations based on evolutionary models"/>
</dbReference>
<dbReference type="PhylomeDB" id="Q5M775"/>
<dbReference type="TreeFam" id="TF316716"/>
<dbReference type="PathwayCommons" id="Q5M775"/>
<dbReference type="SignaLink" id="Q5M775"/>
<dbReference type="BioGRID-ORCS" id="92521">
    <property type="hits" value="11 hits in 1162 CRISPR screens"/>
</dbReference>
<dbReference type="CD-CODE" id="FB4E32DD">
    <property type="entry name" value="Presynaptic clusters and postsynaptic densities"/>
</dbReference>
<dbReference type="ChiTaRS" id="SPECC1">
    <property type="organism name" value="human"/>
</dbReference>
<dbReference type="GeneWiki" id="SPECC1"/>
<dbReference type="GenomeRNAi" id="92521"/>
<dbReference type="Pharos" id="Q5M775">
    <property type="development level" value="Tbio"/>
</dbReference>
<dbReference type="PRO" id="PR:Q5M775"/>
<dbReference type="Proteomes" id="UP000005640">
    <property type="component" value="Chromosome 17"/>
</dbReference>
<dbReference type="RNAct" id="Q5M775">
    <property type="molecule type" value="protein"/>
</dbReference>
<dbReference type="Bgee" id="ENSG00000128487">
    <property type="expression patterns" value="Expressed in calcaneal tendon and 146 other cell types or tissues"/>
</dbReference>
<dbReference type="ExpressionAtlas" id="Q5M775">
    <property type="expression patterns" value="baseline and differential"/>
</dbReference>
<dbReference type="GO" id="GO:0045177">
    <property type="term" value="C:apical part of cell"/>
    <property type="evidence" value="ECO:0007669"/>
    <property type="project" value="Ensembl"/>
</dbReference>
<dbReference type="GO" id="GO:0005829">
    <property type="term" value="C:cytosol"/>
    <property type="evidence" value="ECO:0000314"/>
    <property type="project" value="HPA"/>
</dbReference>
<dbReference type="GO" id="GO:0001650">
    <property type="term" value="C:fibrillar center"/>
    <property type="evidence" value="ECO:0000314"/>
    <property type="project" value="HPA"/>
</dbReference>
<dbReference type="GO" id="GO:0031941">
    <property type="term" value="C:filamentous actin"/>
    <property type="evidence" value="ECO:0000318"/>
    <property type="project" value="GO_Central"/>
</dbReference>
<dbReference type="GO" id="GO:0043231">
    <property type="term" value="C:intracellular membrane-bounded organelle"/>
    <property type="evidence" value="ECO:0000314"/>
    <property type="project" value="HPA"/>
</dbReference>
<dbReference type="GO" id="GO:0016020">
    <property type="term" value="C:membrane"/>
    <property type="evidence" value="ECO:0007669"/>
    <property type="project" value="UniProtKB-SubCell"/>
</dbReference>
<dbReference type="GO" id="GO:0005815">
    <property type="term" value="C:microtubule organizing center"/>
    <property type="evidence" value="ECO:0000318"/>
    <property type="project" value="GO_Central"/>
</dbReference>
<dbReference type="GO" id="GO:0005654">
    <property type="term" value="C:nucleoplasm"/>
    <property type="evidence" value="ECO:0000314"/>
    <property type="project" value="HPA"/>
</dbReference>
<dbReference type="GO" id="GO:0030036">
    <property type="term" value="P:actin cytoskeleton organization"/>
    <property type="evidence" value="ECO:0000318"/>
    <property type="project" value="GO_Central"/>
</dbReference>
<dbReference type="GO" id="GO:0008306">
    <property type="term" value="P:associative learning"/>
    <property type="evidence" value="ECO:0007669"/>
    <property type="project" value="Ensembl"/>
</dbReference>
<dbReference type="GO" id="GO:0001824">
    <property type="term" value="P:blastocyst development"/>
    <property type="evidence" value="ECO:0007669"/>
    <property type="project" value="Ensembl"/>
</dbReference>
<dbReference type="CDD" id="cd21257">
    <property type="entry name" value="CH_CYTSB"/>
    <property type="match status" value="1"/>
</dbReference>
<dbReference type="FunFam" id="1.10.418.10:FF:000020">
    <property type="entry name" value="Cytospin-A isoform 1"/>
    <property type="match status" value="1"/>
</dbReference>
<dbReference type="Gene3D" id="1.10.418.10">
    <property type="entry name" value="Calponin-like domain"/>
    <property type="match status" value="1"/>
</dbReference>
<dbReference type="InterPro" id="IPR001715">
    <property type="entry name" value="CH_dom"/>
</dbReference>
<dbReference type="InterPro" id="IPR036872">
    <property type="entry name" value="CH_dom_sf"/>
</dbReference>
<dbReference type="InterPro" id="IPR050540">
    <property type="entry name" value="F-actin_Monoox_Mical"/>
</dbReference>
<dbReference type="PANTHER" id="PTHR23167">
    <property type="entry name" value="CALPONIN HOMOLOGY DOMAIN-CONTAINING PROTEIN DDB_G0272472-RELATED"/>
    <property type="match status" value="1"/>
</dbReference>
<dbReference type="PANTHER" id="PTHR23167:SF3">
    <property type="entry name" value="CYTOSPIN-B"/>
    <property type="match status" value="1"/>
</dbReference>
<dbReference type="Pfam" id="PF00307">
    <property type="entry name" value="CH"/>
    <property type="match status" value="1"/>
</dbReference>
<dbReference type="SMART" id="SM00033">
    <property type="entry name" value="CH"/>
    <property type="match status" value="1"/>
</dbReference>
<dbReference type="SUPFAM" id="SSF47576">
    <property type="entry name" value="Calponin-homology domain, CH-domain"/>
    <property type="match status" value="1"/>
</dbReference>
<dbReference type="PROSITE" id="PS50021">
    <property type="entry name" value="CH"/>
    <property type="match status" value="1"/>
</dbReference>
<reference key="1">
    <citation type="submission" date="2000-04" db="EMBL/GenBank/DDBJ databases">
        <authorList>
            <person name="Komori S."/>
        </authorList>
    </citation>
    <scope>NUCLEOTIDE SEQUENCE [MRNA] (ISOFORM 2)</scope>
    <scope>VARIANTS ARG-274 AND LEU-293</scope>
    <source>
        <tissue>Testis</tissue>
    </source>
</reference>
<reference key="2">
    <citation type="journal article" date="2004" name="Oncogene">
        <title>A gene highly expressed in tumor cells encodes novel structure proteins.</title>
        <authorList>
            <person name="Sang N."/>
            <person name="Fath D.M."/>
            <person name="Giordano A."/>
        </authorList>
    </citation>
    <scope>NUCLEOTIDE SEQUENCE [MRNA] (ISOFORMS 1; 2; 3 AND 4)</scope>
    <scope>VARIANT LEU-293</scope>
    <scope>SUBCELLULAR LOCATION</scope>
    <scope>TISSUE SPECIFICITY</scope>
    <source>
        <tissue>Testis</tissue>
    </source>
</reference>
<reference key="3">
    <citation type="journal article" date="2004" name="Nat. Genet.">
        <title>Complete sequencing and characterization of 21,243 full-length human cDNAs.</title>
        <authorList>
            <person name="Ota T."/>
            <person name="Suzuki Y."/>
            <person name="Nishikawa T."/>
            <person name="Otsuki T."/>
            <person name="Sugiyama T."/>
            <person name="Irie R."/>
            <person name="Wakamatsu A."/>
            <person name="Hayashi K."/>
            <person name="Sato H."/>
            <person name="Nagai K."/>
            <person name="Kimura K."/>
            <person name="Makita H."/>
            <person name="Sekine M."/>
            <person name="Obayashi M."/>
            <person name="Nishi T."/>
            <person name="Shibahara T."/>
            <person name="Tanaka T."/>
            <person name="Ishii S."/>
            <person name="Yamamoto J."/>
            <person name="Saito K."/>
            <person name="Kawai Y."/>
            <person name="Isono Y."/>
            <person name="Nakamura Y."/>
            <person name="Nagahari K."/>
            <person name="Murakami K."/>
            <person name="Yasuda T."/>
            <person name="Iwayanagi T."/>
            <person name="Wagatsuma M."/>
            <person name="Shiratori A."/>
            <person name="Sudo H."/>
            <person name="Hosoiri T."/>
            <person name="Kaku Y."/>
            <person name="Kodaira H."/>
            <person name="Kondo H."/>
            <person name="Sugawara M."/>
            <person name="Takahashi M."/>
            <person name="Kanda K."/>
            <person name="Yokoi T."/>
            <person name="Furuya T."/>
            <person name="Kikkawa E."/>
            <person name="Omura Y."/>
            <person name="Abe K."/>
            <person name="Kamihara K."/>
            <person name="Katsuta N."/>
            <person name="Sato K."/>
            <person name="Tanikawa M."/>
            <person name="Yamazaki M."/>
            <person name="Ninomiya K."/>
            <person name="Ishibashi T."/>
            <person name="Yamashita H."/>
            <person name="Murakawa K."/>
            <person name="Fujimori K."/>
            <person name="Tanai H."/>
            <person name="Kimata M."/>
            <person name="Watanabe M."/>
            <person name="Hiraoka S."/>
            <person name="Chiba Y."/>
            <person name="Ishida S."/>
            <person name="Ono Y."/>
            <person name="Takiguchi S."/>
            <person name="Watanabe S."/>
            <person name="Yosida M."/>
            <person name="Hotuta T."/>
            <person name="Kusano J."/>
            <person name="Kanehori K."/>
            <person name="Takahashi-Fujii A."/>
            <person name="Hara H."/>
            <person name="Tanase T.-O."/>
            <person name="Nomura Y."/>
            <person name="Togiya S."/>
            <person name="Komai F."/>
            <person name="Hara R."/>
            <person name="Takeuchi K."/>
            <person name="Arita M."/>
            <person name="Imose N."/>
            <person name="Musashino K."/>
            <person name="Yuuki H."/>
            <person name="Oshima A."/>
            <person name="Sasaki N."/>
            <person name="Aotsuka S."/>
            <person name="Yoshikawa Y."/>
            <person name="Matsunawa H."/>
            <person name="Ichihara T."/>
            <person name="Shiohata N."/>
            <person name="Sano S."/>
            <person name="Moriya S."/>
            <person name="Momiyama H."/>
            <person name="Satoh N."/>
            <person name="Takami S."/>
            <person name="Terashima Y."/>
            <person name="Suzuki O."/>
            <person name="Nakagawa S."/>
            <person name="Senoh A."/>
            <person name="Mizoguchi H."/>
            <person name="Goto Y."/>
            <person name="Shimizu F."/>
            <person name="Wakebe H."/>
            <person name="Hishigaki H."/>
            <person name="Watanabe T."/>
            <person name="Sugiyama A."/>
            <person name="Takemoto M."/>
            <person name="Kawakami B."/>
            <person name="Yamazaki M."/>
            <person name="Watanabe K."/>
            <person name="Kumagai A."/>
            <person name="Itakura S."/>
            <person name="Fukuzumi Y."/>
            <person name="Fujimori Y."/>
            <person name="Komiyama M."/>
            <person name="Tashiro H."/>
            <person name="Tanigami A."/>
            <person name="Fujiwara T."/>
            <person name="Ono T."/>
            <person name="Yamada K."/>
            <person name="Fujii Y."/>
            <person name="Ozaki K."/>
            <person name="Hirao M."/>
            <person name="Ohmori Y."/>
            <person name="Kawabata A."/>
            <person name="Hikiji T."/>
            <person name="Kobatake N."/>
            <person name="Inagaki H."/>
            <person name="Ikema Y."/>
            <person name="Okamoto S."/>
            <person name="Okitani R."/>
            <person name="Kawakami T."/>
            <person name="Noguchi S."/>
            <person name="Itoh T."/>
            <person name="Shigeta K."/>
            <person name="Senba T."/>
            <person name="Matsumura K."/>
            <person name="Nakajima Y."/>
            <person name="Mizuno T."/>
            <person name="Morinaga M."/>
            <person name="Sasaki M."/>
            <person name="Togashi T."/>
            <person name="Oyama M."/>
            <person name="Hata H."/>
            <person name="Watanabe M."/>
            <person name="Komatsu T."/>
            <person name="Mizushima-Sugano J."/>
            <person name="Satoh T."/>
            <person name="Shirai Y."/>
            <person name="Takahashi Y."/>
            <person name="Nakagawa K."/>
            <person name="Okumura K."/>
            <person name="Nagase T."/>
            <person name="Nomura N."/>
            <person name="Kikuchi H."/>
            <person name="Masuho Y."/>
            <person name="Yamashita R."/>
            <person name="Nakai K."/>
            <person name="Yada T."/>
            <person name="Nakamura Y."/>
            <person name="Ohara O."/>
            <person name="Isogai T."/>
            <person name="Sugano S."/>
        </authorList>
    </citation>
    <scope>NUCLEOTIDE SEQUENCE [LARGE SCALE MRNA] (ISOFORM 1)</scope>
    <scope>VARIANT LEU-293</scope>
    <source>
        <tissue>Brain</tissue>
    </source>
</reference>
<reference key="4">
    <citation type="journal article" date="2006" name="Nature">
        <title>DNA sequence of human chromosome 17 and analysis of rearrangement in the human lineage.</title>
        <authorList>
            <person name="Zody M.C."/>
            <person name="Garber M."/>
            <person name="Adams D.J."/>
            <person name="Sharpe T."/>
            <person name="Harrow J."/>
            <person name="Lupski J.R."/>
            <person name="Nicholson C."/>
            <person name="Searle S.M."/>
            <person name="Wilming L."/>
            <person name="Young S.K."/>
            <person name="Abouelleil A."/>
            <person name="Allen N.R."/>
            <person name="Bi W."/>
            <person name="Bloom T."/>
            <person name="Borowsky M.L."/>
            <person name="Bugalter B.E."/>
            <person name="Butler J."/>
            <person name="Chang J.L."/>
            <person name="Chen C.-K."/>
            <person name="Cook A."/>
            <person name="Corum B."/>
            <person name="Cuomo C.A."/>
            <person name="de Jong P.J."/>
            <person name="DeCaprio D."/>
            <person name="Dewar K."/>
            <person name="FitzGerald M."/>
            <person name="Gilbert J."/>
            <person name="Gibson R."/>
            <person name="Gnerre S."/>
            <person name="Goldstein S."/>
            <person name="Grafham D.V."/>
            <person name="Grocock R."/>
            <person name="Hafez N."/>
            <person name="Hagopian D.S."/>
            <person name="Hart E."/>
            <person name="Norman C.H."/>
            <person name="Humphray S."/>
            <person name="Jaffe D.B."/>
            <person name="Jones M."/>
            <person name="Kamal M."/>
            <person name="Khodiyar V.K."/>
            <person name="LaButti K."/>
            <person name="Laird G."/>
            <person name="Lehoczky J."/>
            <person name="Liu X."/>
            <person name="Lokyitsang T."/>
            <person name="Loveland J."/>
            <person name="Lui A."/>
            <person name="Macdonald P."/>
            <person name="Major J.E."/>
            <person name="Matthews L."/>
            <person name="Mauceli E."/>
            <person name="McCarroll S.A."/>
            <person name="Mihalev A.H."/>
            <person name="Mudge J."/>
            <person name="Nguyen C."/>
            <person name="Nicol R."/>
            <person name="O'Leary S.B."/>
            <person name="Osoegawa K."/>
            <person name="Schwartz D.C."/>
            <person name="Shaw-Smith C."/>
            <person name="Stankiewicz P."/>
            <person name="Steward C."/>
            <person name="Swarbreck D."/>
            <person name="Venkataraman V."/>
            <person name="Whittaker C.A."/>
            <person name="Yang X."/>
            <person name="Zimmer A.R."/>
            <person name="Bradley A."/>
            <person name="Hubbard T."/>
            <person name="Birren B.W."/>
            <person name="Rogers J."/>
            <person name="Lander E.S."/>
            <person name="Nusbaum C."/>
        </authorList>
    </citation>
    <scope>NUCLEOTIDE SEQUENCE [LARGE SCALE GENOMIC DNA]</scope>
</reference>
<reference key="5">
    <citation type="journal article" date="2004" name="Genome Res.">
        <title>The status, quality, and expansion of the NIH full-length cDNA project: the Mammalian Gene Collection (MGC).</title>
        <authorList>
            <consortium name="The MGC Project Team"/>
        </authorList>
    </citation>
    <scope>NUCLEOTIDE SEQUENCE [LARGE SCALE MRNA] (ISOFORMS 4 AND 5)</scope>
    <scope>NUCLEOTIDE SEQUENCE [LARGE SCALE MRNA] OF 313-1068 (ISOFORMS 2/3)</scope>
    <scope>VARIANT LEU-293</scope>
    <source>
        <tissue>Brain</tissue>
        <tissue>Skin</tissue>
        <tissue>Testis</tissue>
    </source>
</reference>
<reference key="6">
    <citation type="journal article" date="2004" name="Cancer Res.">
        <title>HCMOGT-1 is a novel fusion partner to PDGFRB in juvenile myelomonocytic leukemia with t(5;17)(q33;p11.2).</title>
        <authorList>
            <person name="Morerio C."/>
            <person name="Acquila M."/>
            <person name="Rosanda C."/>
            <person name="Rapella A."/>
            <person name="Dufour C."/>
            <person name="Locatelli F."/>
            <person name="Maserati E."/>
            <person name="Pasquali F."/>
            <person name="Panarello C."/>
        </authorList>
    </citation>
    <scope>CHROMOSOMAL TRANSLOCATION WITH PDGFRB</scope>
</reference>
<reference key="7">
    <citation type="journal article" date="2006" name="Cell">
        <title>Global, in vivo, and site-specific phosphorylation dynamics in signaling networks.</title>
        <authorList>
            <person name="Olsen J.V."/>
            <person name="Blagoev B."/>
            <person name="Gnad F."/>
            <person name="Macek B."/>
            <person name="Kumar C."/>
            <person name="Mortensen P."/>
            <person name="Mann M."/>
        </authorList>
    </citation>
    <scope>IDENTIFICATION BY MASS SPECTROMETRY [LARGE SCALE ANALYSIS]</scope>
    <source>
        <tissue>Cervix carcinoma</tissue>
    </source>
</reference>
<reference key="8">
    <citation type="journal article" date="2008" name="Proc. Natl. Acad. Sci. U.S.A.">
        <title>A quantitative atlas of mitotic phosphorylation.</title>
        <authorList>
            <person name="Dephoure N."/>
            <person name="Zhou C."/>
            <person name="Villen J."/>
            <person name="Beausoleil S.A."/>
            <person name="Bakalarski C.E."/>
            <person name="Elledge S.J."/>
            <person name="Gygi S.P."/>
        </authorList>
    </citation>
    <scope>PHOSPHORYLATION [LARGE SCALE ANALYSIS] AT SER-131; SER-134; SER-138; THR-142; SER-218; SER-847; SER-863 AND SER-912</scope>
    <scope>IDENTIFICATION BY MASS SPECTROMETRY [LARGE SCALE ANALYSIS]</scope>
    <source>
        <tissue>Cervix carcinoma</tissue>
    </source>
</reference>
<reference key="9">
    <citation type="journal article" date="2009" name="Anal. Chem.">
        <title>Lys-N and trypsin cover complementary parts of the phosphoproteome in a refined SCX-based approach.</title>
        <authorList>
            <person name="Gauci S."/>
            <person name="Helbig A.O."/>
            <person name="Slijper M."/>
            <person name="Krijgsveld J."/>
            <person name="Heck A.J."/>
            <person name="Mohammed S."/>
        </authorList>
    </citation>
    <scope>IDENTIFICATION BY MASS SPECTROMETRY [LARGE SCALE ANALYSIS]</scope>
</reference>
<reference key="10">
    <citation type="journal article" date="2010" name="Sci. Signal.">
        <title>Quantitative phosphoproteomics reveals widespread full phosphorylation site occupancy during mitosis.</title>
        <authorList>
            <person name="Olsen J.V."/>
            <person name="Vermeulen M."/>
            <person name="Santamaria A."/>
            <person name="Kumar C."/>
            <person name="Miller M.L."/>
            <person name="Jensen L.J."/>
            <person name="Gnad F."/>
            <person name="Cox J."/>
            <person name="Jensen T.S."/>
            <person name="Nigg E.A."/>
            <person name="Brunak S."/>
            <person name="Mann M."/>
        </authorList>
    </citation>
    <scope>PHOSPHORYLATION [LARGE SCALE ANALYSIS] AT SER-218; SER-241; SER-425; SER-847 AND SER-912</scope>
    <scope>IDENTIFICATION BY MASS SPECTROMETRY [LARGE SCALE ANALYSIS]</scope>
    <source>
        <tissue>Cervix carcinoma</tissue>
    </source>
</reference>
<reference key="11">
    <citation type="journal article" date="2011" name="Sci. Signal.">
        <title>System-wide temporal characterization of the proteome and phosphoproteome of human embryonic stem cell differentiation.</title>
        <authorList>
            <person name="Rigbolt K.T."/>
            <person name="Prokhorova T.A."/>
            <person name="Akimov V."/>
            <person name="Henningsen J."/>
            <person name="Johansen P.T."/>
            <person name="Kratchmarova I."/>
            <person name="Kassem M."/>
            <person name="Mann M."/>
            <person name="Olsen J.V."/>
            <person name="Blagoev B."/>
        </authorList>
    </citation>
    <scope>IDENTIFICATION BY MASS SPECTROMETRY [LARGE SCALE ANALYSIS]</scope>
</reference>
<reference key="12">
    <citation type="journal article" date="2013" name="J. Proteome Res.">
        <title>Toward a comprehensive characterization of a human cancer cell phosphoproteome.</title>
        <authorList>
            <person name="Zhou H."/>
            <person name="Di Palma S."/>
            <person name="Preisinger C."/>
            <person name="Peng M."/>
            <person name="Polat A.N."/>
            <person name="Heck A.J."/>
            <person name="Mohammed S."/>
        </authorList>
    </citation>
    <scope>PHOSPHORYLATION [LARGE SCALE ANALYSIS] AT SER-55; THR-78; SER-112; SER-131; SER-134; SER-218; SER-241; SER-425; SER-847; SER-863 AND SER-914</scope>
    <scope>IDENTIFICATION BY MASS SPECTROMETRY [LARGE SCALE ANALYSIS]</scope>
    <source>
        <tissue>Cervix carcinoma</tissue>
        <tissue>Erythroleukemia</tissue>
    </source>
</reference>
<reference key="13">
    <citation type="journal article" date="2014" name="J. Proteomics">
        <title>An enzyme assisted RP-RPLC approach for in-depth analysis of human liver phosphoproteome.</title>
        <authorList>
            <person name="Bian Y."/>
            <person name="Song C."/>
            <person name="Cheng K."/>
            <person name="Dong M."/>
            <person name="Wang F."/>
            <person name="Huang J."/>
            <person name="Sun D."/>
            <person name="Wang L."/>
            <person name="Ye M."/>
            <person name="Zou H."/>
        </authorList>
    </citation>
    <scope>IDENTIFICATION BY MASS SPECTROMETRY [LARGE SCALE ANALYSIS]</scope>
    <source>
        <tissue>Liver</tissue>
    </source>
</reference>
<reference key="14">
    <citation type="journal article" date="2015" name="Angew. Chem. Int. Ed.">
        <title>Multifunctional reagents for quantitative proteome-wide analysis of protein modification in human cells and dynamic profiling of protein lipidation during vertebrate development.</title>
        <authorList>
            <person name="Broncel M."/>
            <person name="Serwa R.A."/>
            <person name="Ciepla P."/>
            <person name="Krause E."/>
            <person name="Dallman M.J."/>
            <person name="Magee A.I."/>
            <person name="Tate E.W."/>
        </authorList>
    </citation>
    <scope>MYRISTOYLATION AT GLY-2 (ISOFORMS 3; 4 AND 5)</scope>
    <scope>CLEAVAGE OF INITIATOR METHIONINE (ISOFORMS 3; 4 AND 5)</scope>
    <scope>IDENTIFICATION BY MASS SPECTROMETRY</scope>
</reference>
<keyword id="KW-0025">Alternative splicing</keyword>
<keyword id="KW-0160">Chromosomal rearrangement</keyword>
<keyword id="KW-0175">Coiled coil</keyword>
<keyword id="KW-0449">Lipoprotein</keyword>
<keyword id="KW-0472">Membrane</keyword>
<keyword id="KW-0519">Myristate</keyword>
<keyword id="KW-0539">Nucleus</keyword>
<keyword id="KW-0597">Phosphoprotein</keyword>
<keyword id="KW-1267">Proteomics identification</keyword>
<keyword id="KW-0656">Proto-oncogene</keyword>
<keyword id="KW-1185">Reference proteome</keyword>
<gene>
    <name type="primary">SPECC1</name>
    <name type="synonym">CYTSB</name>
    <name type="synonym">NSP5</name>
</gene>
<accession>Q5M775</accession>
<accession>B4DHH0</accession>
<accession>B7WNS8</accession>
<accession>Q5IBP1</accession>
<accession>Q5IBP2</accession>
<accession>Q5IBP3</accession>
<accession>Q5IBP4</accession>
<accession>Q5M772</accession>
<accession>Q5M773</accession>
<accession>Q5M774</accession>
<accession>Q86XT8</accession>
<accession>Q8N4U4</accession>
<accession>Q8WU84</accession>
<accession>Q9HCQ3</accession>
<feature type="chain" id="PRO_0000254033" description="Cytospin-B">
    <location>
        <begin position="1"/>
        <end position="1068"/>
    </location>
</feature>
<feature type="domain" description="Calponin-homology (CH)" evidence="3">
    <location>
        <begin position="962"/>
        <end position="1067"/>
    </location>
</feature>
<feature type="region of interest" description="Disordered" evidence="4">
    <location>
        <begin position="1"/>
        <end position="221"/>
    </location>
</feature>
<feature type="region of interest" description="Disordered" evidence="4">
    <location>
        <begin position="261"/>
        <end position="367"/>
    </location>
</feature>
<feature type="region of interest" description="Disordered" evidence="4">
    <location>
        <begin position="777"/>
        <end position="796"/>
    </location>
</feature>
<feature type="region of interest" description="Disordered" evidence="4">
    <location>
        <begin position="859"/>
        <end position="885"/>
    </location>
</feature>
<feature type="region of interest" description="Disordered" evidence="4">
    <location>
        <begin position="898"/>
        <end position="922"/>
    </location>
</feature>
<feature type="coiled-coil region" evidence="2">
    <location>
        <begin position="579"/>
        <end position="773"/>
    </location>
</feature>
<feature type="compositionally biased region" description="Low complexity" evidence="4">
    <location>
        <begin position="29"/>
        <end position="40"/>
    </location>
</feature>
<feature type="compositionally biased region" description="Low complexity" evidence="4">
    <location>
        <begin position="126"/>
        <end position="144"/>
    </location>
</feature>
<feature type="compositionally biased region" description="Basic and acidic residues" evidence="4">
    <location>
        <begin position="154"/>
        <end position="200"/>
    </location>
</feature>
<feature type="compositionally biased region" description="Polar residues" evidence="4">
    <location>
        <begin position="261"/>
        <end position="295"/>
    </location>
</feature>
<feature type="compositionally biased region" description="Polar residues" evidence="4">
    <location>
        <begin position="309"/>
        <end position="323"/>
    </location>
</feature>
<feature type="compositionally biased region" description="Polar residues" evidence="4">
    <location>
        <begin position="337"/>
        <end position="367"/>
    </location>
</feature>
<feature type="compositionally biased region" description="Polar residues" evidence="4">
    <location>
        <begin position="866"/>
        <end position="875"/>
    </location>
</feature>
<feature type="compositionally biased region" description="Basic and acidic residues" evidence="4">
    <location>
        <begin position="898"/>
        <end position="909"/>
    </location>
</feature>
<feature type="compositionally biased region" description="Low complexity" evidence="4">
    <location>
        <begin position="912"/>
        <end position="922"/>
    </location>
</feature>
<feature type="modified residue" description="Phosphoserine" evidence="1">
    <location>
        <position position="38"/>
    </location>
</feature>
<feature type="modified residue" description="Phosphoserine" evidence="17">
    <location>
        <position position="55"/>
    </location>
</feature>
<feature type="modified residue" description="Phosphothreonine" evidence="17">
    <location>
        <position position="78"/>
    </location>
</feature>
<feature type="modified residue" description="Phosphoserine" evidence="17">
    <location>
        <position position="112"/>
    </location>
</feature>
<feature type="modified residue" description="Phosphoserine" evidence="15 17">
    <location>
        <position position="131"/>
    </location>
</feature>
<feature type="modified residue" description="Phosphoserine" evidence="15 17">
    <location>
        <position position="134"/>
    </location>
</feature>
<feature type="modified residue" description="Phosphoserine" evidence="1">
    <location>
        <position position="137"/>
    </location>
</feature>
<feature type="modified residue" description="Phosphoserine" evidence="15">
    <location>
        <position position="138"/>
    </location>
</feature>
<feature type="modified residue" description="Phosphothreonine" evidence="15">
    <location>
        <position position="142"/>
    </location>
</feature>
<feature type="modified residue" description="Phosphoserine" evidence="15 16 17">
    <location>
        <position position="218"/>
    </location>
</feature>
<feature type="modified residue" description="Phosphoserine" evidence="16 17">
    <location>
        <position position="241"/>
    </location>
</feature>
<feature type="modified residue" description="Phosphoserine" evidence="1">
    <location>
        <position position="361"/>
    </location>
</feature>
<feature type="modified residue" description="Phosphoserine" evidence="1">
    <location>
        <position position="366"/>
    </location>
</feature>
<feature type="modified residue" description="Phosphoserine" evidence="1">
    <location>
        <position position="369"/>
    </location>
</feature>
<feature type="modified residue" description="Phosphoserine" evidence="16 17">
    <location>
        <position position="425"/>
    </location>
</feature>
<feature type="modified residue" description="Phosphoserine" evidence="15 16 17">
    <location>
        <position position="847"/>
    </location>
</feature>
<feature type="modified residue" description="Phosphoserine" evidence="15 17">
    <location>
        <position position="863"/>
    </location>
</feature>
<feature type="modified residue" description="Phosphoserine" evidence="15 16">
    <location>
        <position position="912"/>
    </location>
</feature>
<feature type="modified residue" description="Phosphoserine" evidence="17">
    <location>
        <position position="914"/>
    </location>
</feature>
<feature type="splice variant" id="VSP_021162" description="In isoform 3, isoform 4 and isoform 5." evidence="11 12">
    <original>MRSAAKPWNPAIRAGGHGPDRVRPLPAASSGMKSSKSSTSLAFESRLSRLKRASSEDTLNKPGSTAASGVVRLKKTATAGAISELTESRLRSGT</original>
    <variation>MGNHSGRPEDPEP</variation>
    <location>
        <begin position="1"/>
        <end position="94"/>
    </location>
</feature>
<feature type="splice variant" id="VSP_021163" description="In isoform 5." evidence="11">
    <location>
        <begin position="785"/>
        <end position="1068"/>
    </location>
</feature>
<feature type="splice variant" id="VSP_021164" description="In isoform 2 and isoform 3." evidence="12 13">
    <original>PVDEEP</original>
    <variation>SLGSVS</variation>
    <location>
        <begin position="785"/>
        <end position="790"/>
    </location>
</feature>
<feature type="splice variant" id="VSP_021165" description="In isoform 2 and isoform 3." evidence="12 13">
    <location>
        <begin position="791"/>
        <end position="1068"/>
    </location>
</feature>
<feature type="sequence variant" id="VAR_053055" description="In dbSNP:rs9908032." evidence="10">
    <original>S</original>
    <variation>R</variation>
    <location>
        <position position="274"/>
    </location>
</feature>
<feature type="sequence variant" id="VAR_028800" description="In dbSNP:rs2703806." evidence="5 7 8 10">
    <original>M</original>
    <variation>L</variation>
    <location>
        <position position="293"/>
    </location>
</feature>
<feature type="sequence variant" id="VAR_053056" description="In dbSNP:rs35835131.">
    <original>D</original>
    <variation>N</variation>
    <location>
        <position position="769"/>
    </location>
</feature>
<feature type="sequence conflict" description="In Ref. 1; BAB16440." evidence="14" ref="1">
    <original>AALESQV</original>
    <variation>VRLSPKF</variation>
    <location>
        <begin position="164"/>
        <end position="170"/>
    </location>
</feature>
<feature type="sequence conflict" description="In Ref. 1; BAB16440 and 2; AAW30001." evidence="14" ref="1 2">
    <original>A</original>
    <variation>S</variation>
    <location>
        <position position="179"/>
    </location>
</feature>
<feature type="sequence conflict" description="In Ref. 5; AAH50058." evidence="14" ref="5">
    <original>D</original>
    <variation>N</variation>
    <location>
        <position position="330"/>
    </location>
</feature>
<feature type="sequence conflict" description="In Ref. 5; AAH50058." evidence="14" ref="5">
    <original>G</original>
    <variation>R</variation>
    <location>
        <position position="359"/>
    </location>
</feature>
<feature type="sequence conflict" description="In Ref. 5; AAH33618." evidence="14" ref="5">
    <original>S</original>
    <variation>I</variation>
    <location>
        <position position="364"/>
    </location>
</feature>
<feature type="sequence conflict" description="In Ref. 2; AAW29999/AAW30000/AAW30002." evidence="14" ref="2">
    <original>E</original>
    <variation>G</variation>
    <location>
        <position position="382"/>
    </location>
</feature>
<feature type="sequence conflict" description="In Ref. 5; AAH50058." evidence="14" ref="5">
    <original>EQ</original>
    <variation>DE</variation>
    <location>
        <begin position="434"/>
        <end position="435"/>
    </location>
</feature>
<feature type="sequence conflict" description="In Ref. 2; AAW30000/AAW30002." evidence="14" ref="2">
    <original>R</original>
    <variation>G</variation>
    <location>
        <position position="831"/>
    </location>
</feature>
<feature type="initiator methionine" description="Removed" evidence="9">
    <location sequence="Q5M775-3">
        <position position="1"/>
    </location>
</feature>
<feature type="lipid moiety-binding region" description="N-myristoyl glycine" evidence="9">
    <location sequence="Q5M775-3">
        <position position="2"/>
    </location>
</feature>
<feature type="initiator methionine" description="Removed" evidence="9">
    <location sequence="Q5M775-4">
        <position position="1"/>
    </location>
</feature>
<feature type="lipid moiety-binding region" description="N-myristoyl glycine" evidence="9">
    <location sequence="Q5M775-4">
        <position position="2"/>
    </location>
</feature>
<feature type="initiator methionine" description="Removed" evidence="9">
    <location sequence="Q5M775-5">
        <position position="1"/>
    </location>
</feature>
<feature type="lipid moiety-binding region" description="N-myristoyl glycine" evidence="9">
    <location sequence="Q5M775-5">
        <position position="2"/>
    </location>
</feature>
<sequence length="1068" mass="118585">MRSAAKPWNPAIRAGGHGPDRVRPLPAASSGMKSSKSSTSLAFESRLSRLKRASSEDTLNKPGSTAASGVVRLKKTATAGAISELTESRLRSGTGAFTTTKRTGIPAPREFSVTVSRERSVPRGPSNPRKSVSSPTSSNTPTPTKHLRTPSTKPKQENEGGEKAALESQVRELLAEAKAKDSEINRLRSELKKYKEKRTLNAEGTDALGPNVDGTSVSPGDTEPMIRALEEKNKNFQKELSDLEEENRVLKEKLIYLEHSPNSEGAASHTGDSSCPTSITQESSFGSPTGNQMSSDIDEYKKNIHGNALRTSGSSSSDVTKASLSPDASDFEHITAETPSRPLSSTSNPFKSSKCSTAGSSPNSVSELSLASLTEKIQKMEENHHSTAEELQATLQELSDQQQMVQELTAENEKLVDEKTILETSFHQHRERAEQLSQENEKLMNLLQERVKNEEPTTQEGKIIELEQKCTGILEQGRFEREKLLNIQQQLTCSLRKVEEENQGALEMIKRLKEENEKLNEFLELERHNNNMMAKTLEECRVTLEGLKMENGSLKSHLQGEKQKATEASAVEQTAESCEVQEMLKVARAEKDLLELSCNELRQELLKANGEIKHVSSLLAKVEKDYSYLKEICDHQAEQLSRTSLKLQEKASESDAEIKDMKETIFELEDQVEQHRAVKLHNNQLISELESSVIKLEEQKSDLERQLKTLTKQMKEETEEWRRFQADLQTAVVVANDIKCEAQQELRTVKRKLLEEEEKNARLQKELGDVQGHGRVVTSRAAPPPVDEEPESSEVDAAGRWPGVCVSRTSPTPPESATTVKSLIKSFDLGRPGGAGQNISVHKTPRSPLSGIPVRTAPAAAVSPMQRHSTYSSVRPASRGVTQRLDLPDLPLSDILKGRTETLKPDPHLRKSPSLESLSRPPSLGFGDTRLLSASTRAWKPQSKLSVERKDPLAALAREYGGSKRNALLKWCQKKTQGYANIDITNFSSSWSDGLAFCALLHTYLPAHIPYQELNSQEKKRNLLLAFEAAESVGIKPSLELSEMLYTDRPDWQSVMQYVAQIYKYFET</sequence>
<evidence type="ECO:0000250" key="1">
    <source>
        <dbReference type="UniProtKB" id="Q5SXY1"/>
    </source>
</evidence>
<evidence type="ECO:0000255" key="2"/>
<evidence type="ECO:0000255" key="3">
    <source>
        <dbReference type="PROSITE-ProRule" id="PRU00044"/>
    </source>
</evidence>
<evidence type="ECO:0000256" key="4">
    <source>
        <dbReference type="SAM" id="MobiDB-lite"/>
    </source>
</evidence>
<evidence type="ECO:0000269" key="5">
    <source>
    </source>
</evidence>
<evidence type="ECO:0000269" key="6">
    <source>
    </source>
</evidence>
<evidence type="ECO:0000269" key="7">
    <source>
    </source>
</evidence>
<evidence type="ECO:0000269" key="8">
    <source>
    </source>
</evidence>
<evidence type="ECO:0000269" key="9">
    <source>
    </source>
</evidence>
<evidence type="ECO:0000269" key="10">
    <source ref="1"/>
</evidence>
<evidence type="ECO:0000303" key="11">
    <source>
    </source>
</evidence>
<evidence type="ECO:0000303" key="12">
    <source>
    </source>
</evidence>
<evidence type="ECO:0000303" key="13">
    <source ref="1"/>
</evidence>
<evidence type="ECO:0000305" key="14"/>
<evidence type="ECO:0007744" key="15">
    <source>
    </source>
</evidence>
<evidence type="ECO:0007744" key="16">
    <source>
    </source>
</evidence>
<evidence type="ECO:0007744" key="17">
    <source>
    </source>
</evidence>
<protein>
    <recommendedName>
        <fullName>Cytospin-B</fullName>
    </recommendedName>
    <alternativeName>
        <fullName>Nuclear structure protein 5</fullName>
        <shortName>NSP5</shortName>
    </alternativeName>
    <alternativeName>
        <fullName>Sperm antigen HCMOGT-1</fullName>
    </alternativeName>
    <alternativeName>
        <fullName>Sperm antigen with calponin homology and coiled-coil domains 1</fullName>
    </alternativeName>
</protein>
<proteinExistence type="evidence at protein level"/>